<comment type="function">
    <text evidence="1 5">Catalyzes the conversion of N5-carboxyaminoimidazole ribonucleotide (N5-CAIR) to 4-carboxy-5-aminoimidazole ribonucleotide (CAIR).</text>
</comment>
<comment type="catalytic activity">
    <reaction evidence="1 2 5">
        <text>5-carboxyamino-1-(5-phospho-D-ribosyl)imidazole + H(+) = 5-amino-1-(5-phospho-D-ribosyl)imidazole-4-carboxylate</text>
        <dbReference type="Rhea" id="RHEA:13193"/>
        <dbReference type="ChEBI" id="CHEBI:15378"/>
        <dbReference type="ChEBI" id="CHEBI:58730"/>
        <dbReference type="ChEBI" id="CHEBI:77657"/>
        <dbReference type="EC" id="5.4.99.18"/>
    </reaction>
</comment>
<comment type="biophysicochemical properties">
    <kinetics>
        <KM evidence="5">140 uM for N5-CAIR</KM>
    </kinetics>
</comment>
<comment type="pathway">
    <text evidence="1 5">Purine metabolism; IMP biosynthesis via de novo pathway; 5-amino-1-(5-phospho-D-ribosyl)imidazole-4-carboxylate from 5-amino-1-(5-phospho-D-ribosyl)imidazole (N5-CAIR route): step 2/2.</text>
</comment>
<comment type="subunit">
    <text evidence="3">Homooctamer.</text>
</comment>
<comment type="interaction">
    <interactant intactId="EBI-909394">
        <id>P0AG18</id>
    </interactant>
    <interactant intactId="EBI-909394">
        <id>P0AG18</id>
        <label>purE</label>
    </interactant>
    <organismsDiffer>false</organismsDiffer>
    <experiments>2</experiments>
</comment>
<comment type="similarity">
    <text evidence="1 6">Belongs to the AIR carboxylase family. Class I subfamily.</text>
</comment>
<comment type="caution">
    <text evidence="7">Was originally thought to be the catalytic subunit of phosphoribosylaminoimidazole carboxylase, with ATPase subunit PurK.</text>
</comment>
<keyword id="KW-0002">3D-structure</keyword>
<keyword id="KW-0903">Direct protein sequencing</keyword>
<keyword id="KW-0413">Isomerase</keyword>
<keyword id="KW-0658">Purine biosynthesis</keyword>
<keyword id="KW-1185">Reference proteome</keyword>
<feature type="initiator methionine" description="Removed" evidence="4">
    <location>
        <position position="1"/>
    </location>
</feature>
<feature type="chain" id="PRO_0000074973" description="N5-carboxyaminoimidazole ribonucleotide mutase">
    <location>
        <begin position="2"/>
        <end position="169"/>
    </location>
</feature>
<feature type="binding site" evidence="1 3">
    <location>
        <position position="16"/>
    </location>
    <ligand>
        <name>substrate</name>
    </ligand>
</feature>
<feature type="binding site" evidence="1 3">
    <location>
        <position position="19"/>
    </location>
    <ligand>
        <name>substrate</name>
    </ligand>
</feature>
<feature type="binding site" evidence="1 3">
    <location>
        <position position="46"/>
    </location>
    <ligand>
        <name>substrate</name>
    </ligand>
</feature>
<feature type="strand" evidence="8">
    <location>
        <begin position="10"/>
        <end position="16"/>
    </location>
</feature>
<feature type="helix" evidence="8">
    <location>
        <begin position="17"/>
        <end position="19"/>
    </location>
</feature>
<feature type="helix" evidence="8">
    <location>
        <begin position="20"/>
        <end position="33"/>
    </location>
</feature>
<feature type="strand" evidence="8">
    <location>
        <begin position="37"/>
        <end position="41"/>
    </location>
</feature>
<feature type="turn" evidence="8">
    <location>
        <begin position="44"/>
        <end position="46"/>
    </location>
</feature>
<feature type="helix" evidence="8">
    <location>
        <begin position="48"/>
        <end position="57"/>
    </location>
</feature>
<feature type="turn" evidence="8">
    <location>
        <begin position="58"/>
        <end position="62"/>
    </location>
</feature>
<feature type="strand" evidence="8">
    <location>
        <begin position="64"/>
        <end position="70"/>
    </location>
</feature>
<feature type="helix" evidence="8">
    <location>
        <begin position="76"/>
        <end position="82"/>
    </location>
</feature>
<feature type="strand" evidence="8">
    <location>
        <begin position="88"/>
        <end position="92"/>
    </location>
</feature>
<feature type="turn" evidence="8">
    <location>
        <begin position="96"/>
        <end position="100"/>
    </location>
</feature>
<feature type="helix" evidence="8">
    <location>
        <begin position="101"/>
        <end position="108"/>
    </location>
</feature>
<feature type="helix" evidence="8">
    <location>
        <begin position="123"/>
        <end position="138"/>
    </location>
</feature>
<feature type="helix" evidence="8">
    <location>
        <begin position="142"/>
        <end position="160"/>
    </location>
</feature>
<dbReference type="EC" id="5.4.99.18" evidence="1 2 5"/>
<dbReference type="EMBL" id="X12982">
    <property type="protein sequence ID" value="CAA31420.1"/>
    <property type="molecule type" value="Genomic_DNA"/>
</dbReference>
<dbReference type="EMBL" id="M19657">
    <property type="protein sequence ID" value="AAA24449.1"/>
    <property type="molecule type" value="Genomic_DNA"/>
</dbReference>
<dbReference type="EMBL" id="U82664">
    <property type="protein sequence ID" value="AAB40276.1"/>
    <property type="molecule type" value="Genomic_DNA"/>
</dbReference>
<dbReference type="EMBL" id="U00096">
    <property type="protein sequence ID" value="AAC73625.1"/>
    <property type="molecule type" value="Genomic_DNA"/>
</dbReference>
<dbReference type="EMBL" id="AP009048">
    <property type="protein sequence ID" value="BAE76300.1"/>
    <property type="molecule type" value="Genomic_DNA"/>
</dbReference>
<dbReference type="PIR" id="JT0499">
    <property type="entry name" value="DEECPE"/>
</dbReference>
<dbReference type="RefSeq" id="NP_415056.1">
    <property type="nucleotide sequence ID" value="NC_000913.3"/>
</dbReference>
<dbReference type="RefSeq" id="WP_001295318.1">
    <property type="nucleotide sequence ID" value="NZ_STEB01000007.1"/>
</dbReference>
<dbReference type="PDB" id="1D7A">
    <property type="method" value="X-ray"/>
    <property type="resolution" value="2.50 A"/>
    <property type="chains" value="A/B/C/D/L/M/N/O=8-167"/>
</dbReference>
<dbReference type="PDB" id="1QCZ">
    <property type="method" value="X-ray"/>
    <property type="resolution" value="1.50 A"/>
    <property type="chains" value="A=1-169"/>
</dbReference>
<dbReference type="PDB" id="2ATE">
    <property type="method" value="X-ray"/>
    <property type="resolution" value="1.80 A"/>
    <property type="chains" value="A=1-169"/>
</dbReference>
<dbReference type="PDB" id="2NSH">
    <property type="method" value="X-ray"/>
    <property type="resolution" value="1.80 A"/>
    <property type="chains" value="A=1-169"/>
</dbReference>
<dbReference type="PDB" id="2NSJ">
    <property type="method" value="X-ray"/>
    <property type="resolution" value="2.31 A"/>
    <property type="chains" value="A=1-169"/>
</dbReference>
<dbReference type="PDB" id="2NSL">
    <property type="method" value="X-ray"/>
    <property type="resolution" value="2.00 A"/>
    <property type="chains" value="A=1-169"/>
</dbReference>
<dbReference type="PDBsum" id="1D7A"/>
<dbReference type="PDBsum" id="1QCZ"/>
<dbReference type="PDBsum" id="2ATE"/>
<dbReference type="PDBsum" id="2NSH"/>
<dbReference type="PDBsum" id="2NSJ"/>
<dbReference type="PDBsum" id="2NSL"/>
<dbReference type="SMR" id="P0AG18"/>
<dbReference type="BioGRID" id="4261243">
    <property type="interactions" value="30"/>
</dbReference>
<dbReference type="BioGRID" id="853275">
    <property type="interactions" value="6"/>
</dbReference>
<dbReference type="DIP" id="DIP-10610N"/>
<dbReference type="FunCoup" id="P0AG18">
    <property type="interactions" value="576"/>
</dbReference>
<dbReference type="IntAct" id="P0AG18">
    <property type="interactions" value="11"/>
</dbReference>
<dbReference type="STRING" id="511145.b0523"/>
<dbReference type="jPOST" id="P0AG18"/>
<dbReference type="PaxDb" id="511145-b0523"/>
<dbReference type="EnsemblBacteria" id="AAC73625">
    <property type="protein sequence ID" value="AAC73625"/>
    <property type="gene ID" value="b0523"/>
</dbReference>
<dbReference type="GeneID" id="86945437"/>
<dbReference type="GeneID" id="949031"/>
<dbReference type="KEGG" id="ecj:JW0512"/>
<dbReference type="KEGG" id="eco:b0523"/>
<dbReference type="KEGG" id="ecoc:C3026_02565"/>
<dbReference type="PATRIC" id="fig|1411691.4.peg.1755"/>
<dbReference type="EchoBASE" id="EB0786"/>
<dbReference type="eggNOG" id="COG0041">
    <property type="taxonomic scope" value="Bacteria"/>
</dbReference>
<dbReference type="HOGENOM" id="CLU_094982_2_2_6"/>
<dbReference type="InParanoid" id="P0AG18"/>
<dbReference type="OMA" id="SDWPVME"/>
<dbReference type="OrthoDB" id="9791908at2"/>
<dbReference type="PhylomeDB" id="P0AG18"/>
<dbReference type="BioCyc" id="EcoCyc:PURE-MONOMER"/>
<dbReference type="BioCyc" id="MetaCyc:PURE-MONOMER"/>
<dbReference type="BRENDA" id="5.4.99.18">
    <property type="organism ID" value="2026"/>
</dbReference>
<dbReference type="SABIO-RK" id="P0AG18"/>
<dbReference type="UniPathway" id="UPA00074">
    <property type="reaction ID" value="UER00943"/>
</dbReference>
<dbReference type="EvolutionaryTrace" id="P0AG18"/>
<dbReference type="PRO" id="PR:P0AG18"/>
<dbReference type="Proteomes" id="UP000000625">
    <property type="component" value="Chromosome"/>
</dbReference>
<dbReference type="GO" id="GO:0005829">
    <property type="term" value="C:cytosol"/>
    <property type="evidence" value="ECO:0000314"/>
    <property type="project" value="EcoCyc"/>
</dbReference>
<dbReference type="GO" id="GO:0034023">
    <property type="term" value="F:5-(carboxyamino)imidazole ribonucleotide mutase activity"/>
    <property type="evidence" value="ECO:0000314"/>
    <property type="project" value="EcoCyc"/>
</dbReference>
<dbReference type="GO" id="GO:0042802">
    <property type="term" value="F:identical protein binding"/>
    <property type="evidence" value="ECO:0000353"/>
    <property type="project" value="IntAct"/>
</dbReference>
<dbReference type="GO" id="GO:0006189">
    <property type="term" value="P:'de novo' IMP biosynthetic process"/>
    <property type="evidence" value="ECO:0007669"/>
    <property type="project" value="UniProtKB-UniRule"/>
</dbReference>
<dbReference type="FunFam" id="3.40.50.1970:FF:000004">
    <property type="entry name" value="N5-carboxyaminoimidazole ribonucleotide mutase"/>
    <property type="match status" value="1"/>
</dbReference>
<dbReference type="Gene3D" id="3.40.50.1970">
    <property type="match status" value="1"/>
</dbReference>
<dbReference type="HAMAP" id="MF_01929">
    <property type="entry name" value="PurE_classI"/>
    <property type="match status" value="1"/>
</dbReference>
<dbReference type="InterPro" id="IPR033747">
    <property type="entry name" value="PurE_ClassI"/>
</dbReference>
<dbReference type="InterPro" id="IPR000031">
    <property type="entry name" value="PurE_dom"/>
</dbReference>
<dbReference type="InterPro" id="IPR024694">
    <property type="entry name" value="PurE_prokaryotes"/>
</dbReference>
<dbReference type="NCBIfam" id="TIGR01162">
    <property type="entry name" value="purE"/>
    <property type="match status" value="1"/>
</dbReference>
<dbReference type="PANTHER" id="PTHR23046:SF2">
    <property type="entry name" value="PHOSPHORIBOSYLAMINOIMIDAZOLE CARBOXYLASE"/>
    <property type="match status" value="1"/>
</dbReference>
<dbReference type="PANTHER" id="PTHR23046">
    <property type="entry name" value="PHOSPHORIBOSYLAMINOIMIDAZOLE CARBOXYLASE CATALYTIC SUBUNIT"/>
    <property type="match status" value="1"/>
</dbReference>
<dbReference type="Pfam" id="PF00731">
    <property type="entry name" value="AIRC"/>
    <property type="match status" value="1"/>
</dbReference>
<dbReference type="PIRSF" id="PIRSF001338">
    <property type="entry name" value="AIR_carboxylase"/>
    <property type="match status" value="1"/>
</dbReference>
<dbReference type="SMART" id="SM01001">
    <property type="entry name" value="AIRC"/>
    <property type="match status" value="1"/>
</dbReference>
<dbReference type="SUPFAM" id="SSF52255">
    <property type="entry name" value="N5-CAIR mutase (phosphoribosylaminoimidazole carboxylase, PurE)"/>
    <property type="match status" value="1"/>
</dbReference>
<protein>
    <recommendedName>
        <fullName evidence="1 6">N5-carboxyaminoimidazole ribonucleotide mutase</fullName>
        <shortName evidence="1 6">N5-CAIR mutase</shortName>
        <ecNumber evidence="1 2 5">5.4.99.18</ecNumber>
    </recommendedName>
    <alternativeName>
        <fullName evidence="1 6">5-(carboxyamino)imidazole ribonucleotide mutase</fullName>
    </alternativeName>
</protein>
<proteinExistence type="evidence at protein level"/>
<evidence type="ECO:0000255" key="1">
    <source>
        <dbReference type="HAMAP-Rule" id="MF_01929"/>
    </source>
</evidence>
<evidence type="ECO:0000269" key="2">
    <source>
    </source>
</evidence>
<evidence type="ECO:0000269" key="3">
    <source>
    </source>
</evidence>
<evidence type="ECO:0000269" key="4">
    <source>
    </source>
</evidence>
<evidence type="ECO:0000269" key="5">
    <source>
    </source>
</evidence>
<evidence type="ECO:0000305" key="6"/>
<evidence type="ECO:0000305" key="7">
    <source>
    </source>
</evidence>
<evidence type="ECO:0007829" key="8">
    <source>
        <dbReference type="PDB" id="1QCZ"/>
    </source>
</evidence>
<reference key="1">
    <citation type="journal article" date="1989" name="J. Bacteriol.">
        <title>Nucleotide sequence analysis of the purEK operon encoding 5'-phosphoribosyl-5-aminoimidazole carboxylase of Escherichia coli K-12.</title>
        <authorList>
            <person name="Tiedeman A.A."/>
            <person name="Keyhani J."/>
            <person name="Kamholz J."/>
            <person name="Daum H.A. III"/>
            <person name="Gots J.S."/>
            <person name="Smith J.M."/>
        </authorList>
    </citation>
    <scope>NUCLEOTIDE SEQUENCE [GENOMIC DNA]</scope>
    <source>
        <strain>K12</strain>
    </source>
</reference>
<reference key="2">
    <citation type="journal article" date="1989" name="J. Bacteriol.">
        <title>Identification and sequence analysis of Escherichia coli purE and purK genes encoding 5'-phosphoribosyl-5-amino-4-imidazole carboxylase for de novo purine biosynthesis.</title>
        <authorList>
            <person name="Watanabe W."/>
            <person name="Sampei G."/>
            <person name="Aiba A."/>
            <person name="Mizobuchi K."/>
        </authorList>
    </citation>
    <scope>NUCLEOTIDE SEQUENCE [GENOMIC DNA]</scope>
</reference>
<reference key="3">
    <citation type="submission" date="1997-01" db="EMBL/GenBank/DDBJ databases">
        <title>Sequence of minutes 4-25 of Escherichia coli.</title>
        <authorList>
            <person name="Chung E."/>
            <person name="Allen E."/>
            <person name="Araujo R."/>
            <person name="Aparicio A.M."/>
            <person name="Davis K."/>
            <person name="Duncan M."/>
            <person name="Federspiel N."/>
            <person name="Hyman R."/>
            <person name="Kalman S."/>
            <person name="Komp C."/>
            <person name="Kurdi O."/>
            <person name="Lew H."/>
            <person name="Lin D."/>
            <person name="Namath A."/>
            <person name="Oefner P."/>
            <person name="Roberts D."/>
            <person name="Schramm S."/>
            <person name="Davis R.W."/>
        </authorList>
    </citation>
    <scope>NUCLEOTIDE SEQUENCE [LARGE SCALE GENOMIC DNA]</scope>
    <source>
        <strain>K12 / MG1655 / ATCC 47076</strain>
    </source>
</reference>
<reference key="4">
    <citation type="journal article" date="1997" name="Science">
        <title>The complete genome sequence of Escherichia coli K-12.</title>
        <authorList>
            <person name="Blattner F.R."/>
            <person name="Plunkett G. III"/>
            <person name="Bloch C.A."/>
            <person name="Perna N.T."/>
            <person name="Burland V."/>
            <person name="Riley M."/>
            <person name="Collado-Vides J."/>
            <person name="Glasner J.D."/>
            <person name="Rode C.K."/>
            <person name="Mayhew G.F."/>
            <person name="Gregor J."/>
            <person name="Davis N.W."/>
            <person name="Kirkpatrick H.A."/>
            <person name="Goeden M.A."/>
            <person name="Rose D.J."/>
            <person name="Mau B."/>
            <person name="Shao Y."/>
        </authorList>
    </citation>
    <scope>NUCLEOTIDE SEQUENCE [LARGE SCALE GENOMIC DNA]</scope>
    <source>
        <strain>K12 / MG1655 / ATCC 47076</strain>
    </source>
</reference>
<reference key="5">
    <citation type="journal article" date="2006" name="Mol. Syst. Biol.">
        <title>Highly accurate genome sequences of Escherichia coli K-12 strains MG1655 and W3110.</title>
        <authorList>
            <person name="Hayashi K."/>
            <person name="Morooka N."/>
            <person name="Yamamoto Y."/>
            <person name="Fujita K."/>
            <person name="Isono K."/>
            <person name="Choi S."/>
            <person name="Ohtsubo E."/>
            <person name="Baba T."/>
            <person name="Wanner B.L."/>
            <person name="Mori H."/>
            <person name="Horiuchi T."/>
        </authorList>
    </citation>
    <scope>NUCLEOTIDE SEQUENCE [LARGE SCALE GENOMIC DNA]</scope>
    <source>
        <strain>K12 / W3110 / ATCC 27325 / DSM 5911</strain>
    </source>
</reference>
<reference key="6">
    <citation type="journal article" date="1992" name="Biochemistry">
        <title>Purification and characterization of the purE, purK, and purC gene products: identification of a previously unrecognized energy requirement in the purine biosynthetic pathway.</title>
        <authorList>
            <person name="Meyer E."/>
            <person name="Leonard N.J."/>
            <person name="Bhat B."/>
            <person name="Stubbe J."/>
            <person name="Smith J.M."/>
        </authorList>
    </citation>
    <scope>PROTEIN SEQUENCE OF 2-11</scope>
</reference>
<reference key="7">
    <citation type="journal article" date="1994" name="Biochemistry">
        <title>N5-carboxyaminoimidazole ribonucleotide: evidence for a new intermediate and two new enzymatic activities in the de novo purine biosynthetic pathway of Escherichia coli.</title>
        <authorList>
            <person name="Mueller E.J."/>
            <person name="Meyer E."/>
            <person name="Rudolph J."/>
            <person name="Davisson V.J."/>
            <person name="Stubbe J."/>
        </authorList>
    </citation>
    <scope>FUNCTION</scope>
    <scope>CATALYTIC ACTIVITY</scope>
    <scope>SUBSTRATE SPECIFICITY</scope>
    <scope>BIOPHYSICOCHEMICAL PROPERTIES</scope>
    <scope>PATHWAY</scope>
</reference>
<reference key="8">
    <citation type="journal article" date="1999" name="Biochemistry">
        <title>Evidence for the direct transfer of the carboxylate of N5-carboxyaminoimidazole ribonucleotide (N5-CAIR) to generate 4-carboxy-5-aminoimidazole ribonucleotide catalyzed by Escherichia coli PurE, an N5-CAIR mutase.</title>
        <authorList>
            <person name="Meyer E."/>
            <person name="Kappock T.J."/>
            <person name="Osuji C."/>
            <person name="Stubbe J."/>
        </authorList>
    </citation>
    <scope>CATALYTIC ACTIVITY</scope>
    <scope>REACTION MECHANISM</scope>
</reference>
<reference key="9">
    <citation type="journal article" date="1999" name="Structure">
        <title>Crystal structure of Escherichia coli PurE, an unusual mutase in the purine biosynthetic pathway.</title>
        <authorList>
            <person name="Mathews I.I."/>
            <person name="Kappock T.J."/>
            <person name="Stubbe J."/>
            <person name="Ealick S.E."/>
        </authorList>
    </citation>
    <scope>X-RAY CRYSTALLOGRAPHY (1.5 ANGSTROMS) IN COMPLEX WITH N5-CARBOXYAMINOIMIDAZOLE RIBONUCLEOTIDE</scope>
    <scope>SUBUNIT</scope>
</reference>
<sequence length="169" mass="17780">MSSRNNPARVAIVMGSKSDWATMQFAAEIFEILNVPHHVEVVSAHRTPDKLFSFAESAEENGYQVIIAGAGGAAHLPGMIAAKTLVPVLGVPVQSAALSGVDSLYSIVQMPRGIPVGTLAIGKAGAANAALLAAQILATHDKELHQRLNDWRKAQTDEVLENPDPRGAA</sequence>
<accession>P0AG18</accession>
<accession>P09028</accession>
<accession>Q2MBQ6</accession>
<name>PURE_ECOLI</name>
<organism>
    <name type="scientific">Escherichia coli (strain K12)</name>
    <dbReference type="NCBI Taxonomy" id="83333"/>
    <lineage>
        <taxon>Bacteria</taxon>
        <taxon>Pseudomonadati</taxon>
        <taxon>Pseudomonadota</taxon>
        <taxon>Gammaproteobacteria</taxon>
        <taxon>Enterobacterales</taxon>
        <taxon>Enterobacteriaceae</taxon>
        <taxon>Escherichia</taxon>
    </lineage>
</organism>
<gene>
    <name evidence="1" type="primary">purE</name>
    <name type="ordered locus">b0523</name>
    <name type="ordered locus">JW0512</name>
</gene>